<proteinExistence type="inferred from homology"/>
<reference key="1">
    <citation type="journal article" date="2010" name="BMC Genomics">
        <title>Legionella pneumophila pangenome reveals strain-specific virulence factors.</title>
        <authorList>
            <person name="D'Auria G."/>
            <person name="Jimenez-Hernandez N."/>
            <person name="Peris-Bondia F."/>
            <person name="Moya A."/>
            <person name="Latorre A."/>
        </authorList>
    </citation>
    <scope>NUCLEOTIDE SEQUENCE [LARGE SCALE GENOMIC DNA]</scope>
    <source>
        <strain>2300/99 Alcoy</strain>
    </source>
</reference>
<evidence type="ECO:0000255" key="1">
    <source>
        <dbReference type="HAMAP-Rule" id="MF_01966"/>
    </source>
</evidence>
<gene>
    <name evidence="1" type="primary">nnrE</name>
    <name type="ordered locus">lpa_04097</name>
</gene>
<comment type="function">
    <text evidence="1">Catalyzes the epimerization of the S- and R-forms of NAD(P)HX, a damaged form of NAD(P)H that is a result of enzymatic or heat-dependent hydration. This is a prerequisite for the S-specific NAD(P)H-hydrate dehydratase to allow the repair of both epimers of NAD(P)HX.</text>
</comment>
<comment type="catalytic activity">
    <reaction evidence="1">
        <text>(6R)-NADHX = (6S)-NADHX</text>
        <dbReference type="Rhea" id="RHEA:32215"/>
        <dbReference type="ChEBI" id="CHEBI:64074"/>
        <dbReference type="ChEBI" id="CHEBI:64075"/>
        <dbReference type="EC" id="5.1.99.6"/>
    </reaction>
</comment>
<comment type="catalytic activity">
    <reaction evidence="1">
        <text>(6R)-NADPHX = (6S)-NADPHX</text>
        <dbReference type="Rhea" id="RHEA:32227"/>
        <dbReference type="ChEBI" id="CHEBI:64076"/>
        <dbReference type="ChEBI" id="CHEBI:64077"/>
        <dbReference type="EC" id="5.1.99.6"/>
    </reaction>
</comment>
<comment type="cofactor">
    <cofactor evidence="1">
        <name>K(+)</name>
        <dbReference type="ChEBI" id="CHEBI:29103"/>
    </cofactor>
    <text evidence="1">Binds 1 potassium ion per subunit.</text>
</comment>
<comment type="similarity">
    <text evidence="1">Belongs to the NnrE/AIBP family.</text>
</comment>
<name>NNRE_LEGP2</name>
<protein>
    <recommendedName>
        <fullName evidence="1">NAD(P)H-hydrate epimerase</fullName>
        <ecNumber evidence="1">5.1.99.6</ecNumber>
    </recommendedName>
    <alternativeName>
        <fullName evidence="1">NAD(P)HX epimerase</fullName>
    </alternativeName>
</protein>
<organism>
    <name type="scientific">Legionella pneumophila serogroup 1 (strain 2300/99 Alcoy)</name>
    <dbReference type="NCBI Taxonomy" id="423212"/>
    <lineage>
        <taxon>Bacteria</taxon>
        <taxon>Pseudomonadati</taxon>
        <taxon>Pseudomonadota</taxon>
        <taxon>Gammaproteobacteria</taxon>
        <taxon>Legionellales</taxon>
        <taxon>Legionellaceae</taxon>
        <taxon>Legionella</taxon>
    </lineage>
</organism>
<sequence>MNYYFTKGKPQLVNMKTPIYLVTQFQQLMDLMQNQYEVSCLELMQRSGKAACDFLVYRWPKVKKISIFCGRGDNGGQGYVLAQQAKKMGMVPTVWQVGHQMSMSKPPQMHKEVWYEMNSCHQQGIVLHTYSPDIDLGDPELIVDALFGVGLYGHVRPEIALLLQRLQQFTVPILAIEVPTGINASTGEIAGNALAATATITFLCMKLGLLINDGKIYSGEIAFDDLLAPEAIYQQVKGIEESSLLDSSTFFSKKIWYRNKTQKGWQLSIN</sequence>
<dbReference type="EC" id="5.1.99.6" evidence="1"/>
<dbReference type="EMBL" id="CP001828">
    <property type="protein sequence ID" value="ADG26213.1"/>
    <property type="molecule type" value="Genomic_DNA"/>
</dbReference>
<dbReference type="RefSeq" id="WP_013101985.1">
    <property type="nucleotide sequence ID" value="NC_014125.1"/>
</dbReference>
<dbReference type="SMR" id="D5TAM8"/>
<dbReference type="KEGG" id="lpa:lpa_04097"/>
<dbReference type="HOGENOM" id="CLU_024853_0_1_6"/>
<dbReference type="GO" id="GO:0046872">
    <property type="term" value="F:metal ion binding"/>
    <property type="evidence" value="ECO:0007669"/>
    <property type="project" value="UniProtKB-KW"/>
</dbReference>
<dbReference type="GO" id="GO:0052856">
    <property type="term" value="F:NAD(P)HX epimerase activity"/>
    <property type="evidence" value="ECO:0007669"/>
    <property type="project" value="UniProtKB-UniRule"/>
</dbReference>
<dbReference type="GO" id="GO:0000166">
    <property type="term" value="F:nucleotide binding"/>
    <property type="evidence" value="ECO:0007669"/>
    <property type="project" value="UniProtKB-KW"/>
</dbReference>
<dbReference type="Gene3D" id="3.40.50.10260">
    <property type="entry name" value="YjeF N-terminal domain"/>
    <property type="match status" value="1"/>
</dbReference>
<dbReference type="HAMAP" id="MF_01966">
    <property type="entry name" value="NADHX_epimerase"/>
    <property type="match status" value="1"/>
</dbReference>
<dbReference type="InterPro" id="IPR004443">
    <property type="entry name" value="YjeF_N_dom"/>
</dbReference>
<dbReference type="InterPro" id="IPR036652">
    <property type="entry name" value="YjeF_N_dom_sf"/>
</dbReference>
<dbReference type="NCBIfam" id="TIGR00197">
    <property type="entry name" value="yjeF_nterm"/>
    <property type="match status" value="1"/>
</dbReference>
<dbReference type="Pfam" id="PF03853">
    <property type="entry name" value="YjeF_N"/>
    <property type="match status" value="1"/>
</dbReference>
<dbReference type="SUPFAM" id="SSF64153">
    <property type="entry name" value="YjeF N-terminal domain-like"/>
    <property type="match status" value="1"/>
</dbReference>
<dbReference type="PROSITE" id="PS51385">
    <property type="entry name" value="YJEF_N"/>
    <property type="match status" value="1"/>
</dbReference>
<feature type="chain" id="PRO_0000416363" description="NAD(P)H-hydrate epimerase">
    <location>
        <begin position="1"/>
        <end position="270"/>
    </location>
</feature>
<feature type="domain" description="YjeF N-terminal" evidence="1">
    <location>
        <begin position="25"/>
        <end position="234"/>
    </location>
</feature>
<feature type="binding site" evidence="1">
    <location>
        <begin position="73"/>
        <end position="77"/>
    </location>
    <ligand>
        <name>(6S)-NADPHX</name>
        <dbReference type="ChEBI" id="CHEBI:64076"/>
    </ligand>
</feature>
<feature type="binding site" evidence="1">
    <location>
        <position position="74"/>
    </location>
    <ligand>
        <name>K(+)</name>
        <dbReference type="ChEBI" id="CHEBI:29103"/>
    </ligand>
</feature>
<feature type="binding site" evidence="1">
    <location>
        <position position="144"/>
    </location>
    <ligand>
        <name>K(+)</name>
        <dbReference type="ChEBI" id="CHEBI:29103"/>
    </ligand>
</feature>
<feature type="binding site" evidence="1">
    <location>
        <begin position="148"/>
        <end position="154"/>
    </location>
    <ligand>
        <name>(6S)-NADPHX</name>
        <dbReference type="ChEBI" id="CHEBI:64076"/>
    </ligand>
</feature>
<feature type="binding site" evidence="1">
    <location>
        <position position="177"/>
    </location>
    <ligand>
        <name>(6S)-NADPHX</name>
        <dbReference type="ChEBI" id="CHEBI:64076"/>
    </ligand>
</feature>
<feature type="binding site" evidence="1">
    <location>
        <position position="180"/>
    </location>
    <ligand>
        <name>K(+)</name>
        <dbReference type="ChEBI" id="CHEBI:29103"/>
    </ligand>
</feature>
<accession>D5TAM8</accession>
<keyword id="KW-0413">Isomerase</keyword>
<keyword id="KW-0479">Metal-binding</keyword>
<keyword id="KW-0520">NAD</keyword>
<keyword id="KW-0521">NADP</keyword>
<keyword id="KW-0547">Nucleotide-binding</keyword>
<keyword id="KW-0630">Potassium</keyword>